<dbReference type="EMBL" id="CU928164">
    <property type="protein sequence ID" value="CAR19899.1"/>
    <property type="molecule type" value="Genomic_DNA"/>
</dbReference>
<dbReference type="RefSeq" id="WP_000022442.1">
    <property type="nucleotide sequence ID" value="NC_011750.1"/>
</dbReference>
<dbReference type="RefSeq" id="YP_002409682.1">
    <property type="nucleotide sequence ID" value="NC_011750.1"/>
</dbReference>
<dbReference type="SMR" id="B7NLL0"/>
<dbReference type="STRING" id="585057.ECIAI39_3785"/>
<dbReference type="GeneID" id="75173461"/>
<dbReference type="KEGG" id="ect:ECIAI39_3785"/>
<dbReference type="PATRIC" id="fig|585057.6.peg.3922"/>
<dbReference type="HOGENOM" id="CLU_095787_0_0_6"/>
<dbReference type="Proteomes" id="UP000000749">
    <property type="component" value="Chromosome"/>
</dbReference>
<dbReference type="GO" id="GO:0005886">
    <property type="term" value="C:plasma membrane"/>
    <property type="evidence" value="ECO:0007669"/>
    <property type="project" value="UniProtKB-SubCell"/>
</dbReference>
<dbReference type="GO" id="GO:0008381">
    <property type="term" value="F:mechanosensitive monoatomic ion channel activity"/>
    <property type="evidence" value="ECO:0007669"/>
    <property type="project" value="UniProtKB-UniRule"/>
</dbReference>
<dbReference type="FunFam" id="1.10.1200.120:FF:000001">
    <property type="entry name" value="Large-conductance mechanosensitive channel"/>
    <property type="match status" value="1"/>
</dbReference>
<dbReference type="Gene3D" id="1.10.1200.120">
    <property type="entry name" value="Large-conductance mechanosensitive channel, MscL, domain 1"/>
    <property type="match status" value="1"/>
</dbReference>
<dbReference type="HAMAP" id="MF_00115">
    <property type="entry name" value="MscL"/>
    <property type="match status" value="1"/>
</dbReference>
<dbReference type="InterPro" id="IPR019823">
    <property type="entry name" value="Mechanosensitive_channel_CS"/>
</dbReference>
<dbReference type="InterPro" id="IPR001185">
    <property type="entry name" value="MS_channel"/>
</dbReference>
<dbReference type="InterPro" id="IPR037673">
    <property type="entry name" value="MSC/AndL"/>
</dbReference>
<dbReference type="InterPro" id="IPR036019">
    <property type="entry name" value="MscL_channel"/>
</dbReference>
<dbReference type="NCBIfam" id="TIGR00220">
    <property type="entry name" value="mscL"/>
    <property type="match status" value="1"/>
</dbReference>
<dbReference type="NCBIfam" id="NF001841">
    <property type="entry name" value="PRK00567.1-1"/>
    <property type="match status" value="1"/>
</dbReference>
<dbReference type="NCBIfam" id="NF001843">
    <property type="entry name" value="PRK00567.1-4"/>
    <property type="match status" value="1"/>
</dbReference>
<dbReference type="PANTHER" id="PTHR30266:SF2">
    <property type="entry name" value="LARGE-CONDUCTANCE MECHANOSENSITIVE CHANNEL"/>
    <property type="match status" value="1"/>
</dbReference>
<dbReference type="PANTHER" id="PTHR30266">
    <property type="entry name" value="MECHANOSENSITIVE CHANNEL MSCL"/>
    <property type="match status" value="1"/>
</dbReference>
<dbReference type="Pfam" id="PF01741">
    <property type="entry name" value="MscL"/>
    <property type="match status" value="1"/>
</dbReference>
<dbReference type="PRINTS" id="PR01264">
    <property type="entry name" value="MECHCHANNEL"/>
</dbReference>
<dbReference type="SUPFAM" id="SSF81330">
    <property type="entry name" value="Gated mechanosensitive channel"/>
    <property type="match status" value="1"/>
</dbReference>
<dbReference type="PROSITE" id="PS01327">
    <property type="entry name" value="MSCL"/>
    <property type="match status" value="1"/>
</dbReference>
<comment type="function">
    <text evidence="1">Channel that opens in response to stretch forces in the membrane lipid bilayer. May participate in the regulation of osmotic pressure changes within the cell.</text>
</comment>
<comment type="subunit">
    <text evidence="1">Homopentamer.</text>
</comment>
<comment type="subcellular location">
    <subcellularLocation>
        <location evidence="1">Cell inner membrane</location>
        <topology evidence="1">Multi-pass membrane protein</topology>
    </subcellularLocation>
</comment>
<comment type="similarity">
    <text evidence="1">Belongs to the MscL family.</text>
</comment>
<gene>
    <name evidence="1" type="primary">mscL</name>
    <name type="ordered locus">ECIAI39_3785</name>
</gene>
<reference key="1">
    <citation type="journal article" date="2009" name="PLoS Genet.">
        <title>Organised genome dynamics in the Escherichia coli species results in highly diverse adaptive paths.</title>
        <authorList>
            <person name="Touchon M."/>
            <person name="Hoede C."/>
            <person name="Tenaillon O."/>
            <person name="Barbe V."/>
            <person name="Baeriswyl S."/>
            <person name="Bidet P."/>
            <person name="Bingen E."/>
            <person name="Bonacorsi S."/>
            <person name="Bouchier C."/>
            <person name="Bouvet O."/>
            <person name="Calteau A."/>
            <person name="Chiapello H."/>
            <person name="Clermont O."/>
            <person name="Cruveiller S."/>
            <person name="Danchin A."/>
            <person name="Diard M."/>
            <person name="Dossat C."/>
            <person name="Karoui M.E."/>
            <person name="Frapy E."/>
            <person name="Garry L."/>
            <person name="Ghigo J.M."/>
            <person name="Gilles A.M."/>
            <person name="Johnson J."/>
            <person name="Le Bouguenec C."/>
            <person name="Lescat M."/>
            <person name="Mangenot S."/>
            <person name="Martinez-Jehanne V."/>
            <person name="Matic I."/>
            <person name="Nassif X."/>
            <person name="Oztas S."/>
            <person name="Petit M.A."/>
            <person name="Pichon C."/>
            <person name="Rouy Z."/>
            <person name="Ruf C.S."/>
            <person name="Schneider D."/>
            <person name="Tourret J."/>
            <person name="Vacherie B."/>
            <person name="Vallenet D."/>
            <person name="Medigue C."/>
            <person name="Rocha E.P.C."/>
            <person name="Denamur E."/>
        </authorList>
    </citation>
    <scope>NUCLEOTIDE SEQUENCE [LARGE SCALE GENOMIC DNA]</scope>
    <source>
        <strain>IAI39 / ExPEC</strain>
    </source>
</reference>
<evidence type="ECO:0000255" key="1">
    <source>
        <dbReference type="HAMAP-Rule" id="MF_00115"/>
    </source>
</evidence>
<keyword id="KW-0997">Cell inner membrane</keyword>
<keyword id="KW-1003">Cell membrane</keyword>
<keyword id="KW-0407">Ion channel</keyword>
<keyword id="KW-0406">Ion transport</keyword>
<keyword id="KW-0472">Membrane</keyword>
<keyword id="KW-0812">Transmembrane</keyword>
<keyword id="KW-1133">Transmembrane helix</keyword>
<keyword id="KW-0813">Transport</keyword>
<protein>
    <recommendedName>
        <fullName evidence="1">Large-conductance mechanosensitive channel</fullName>
    </recommendedName>
</protein>
<feature type="chain" id="PRO_1000191369" description="Large-conductance mechanosensitive channel">
    <location>
        <begin position="1"/>
        <end position="136"/>
    </location>
</feature>
<feature type="transmembrane region" description="Helical" evidence="1">
    <location>
        <begin position="10"/>
        <end position="30"/>
    </location>
</feature>
<feature type="transmembrane region" description="Helical" evidence="1">
    <location>
        <begin position="76"/>
        <end position="96"/>
    </location>
</feature>
<sequence>MSIIKEFREFAMRGNVVDLAVGVIIGAAFGKIVSSLVADIIMPPLGLLIGGIDFKQFAVTLRDAQGDIPAVVMHYGVFIQNVFDFLIVAFAIFMAIKLINKLNRKKEEPAAAPAPTKEEVLLTEIRDLLKEQNNRS</sequence>
<name>MSCL_ECO7I</name>
<proteinExistence type="inferred from homology"/>
<accession>B7NLL0</accession>
<organism>
    <name type="scientific">Escherichia coli O7:K1 (strain IAI39 / ExPEC)</name>
    <dbReference type="NCBI Taxonomy" id="585057"/>
    <lineage>
        <taxon>Bacteria</taxon>
        <taxon>Pseudomonadati</taxon>
        <taxon>Pseudomonadota</taxon>
        <taxon>Gammaproteobacteria</taxon>
        <taxon>Enterobacterales</taxon>
        <taxon>Enterobacteriaceae</taxon>
        <taxon>Escherichia</taxon>
    </lineage>
</organism>